<comment type="function">
    <text evidence="1">Catalyzes the reversible phosphorylation of UMP to UDP.</text>
</comment>
<comment type="catalytic activity">
    <reaction evidence="1">
        <text>UMP + ATP = UDP + ADP</text>
        <dbReference type="Rhea" id="RHEA:24400"/>
        <dbReference type="ChEBI" id="CHEBI:30616"/>
        <dbReference type="ChEBI" id="CHEBI:57865"/>
        <dbReference type="ChEBI" id="CHEBI:58223"/>
        <dbReference type="ChEBI" id="CHEBI:456216"/>
        <dbReference type="EC" id="2.7.4.22"/>
    </reaction>
</comment>
<comment type="activity regulation">
    <text evidence="1">Inhibited by UTP.</text>
</comment>
<comment type="pathway">
    <text evidence="1">Pyrimidine metabolism; CTP biosynthesis via de novo pathway; UDP from UMP (UMPK route): step 1/1.</text>
</comment>
<comment type="subunit">
    <text evidence="1">Homohexamer.</text>
</comment>
<comment type="subcellular location">
    <subcellularLocation>
        <location evidence="1">Cytoplasm</location>
    </subcellularLocation>
</comment>
<comment type="similarity">
    <text evidence="1">Belongs to the UMP kinase family.</text>
</comment>
<organism>
    <name type="scientific">Burkholderia vietnamiensis (strain G4 / LMG 22486)</name>
    <name type="common">Burkholderia cepacia (strain R1808)</name>
    <dbReference type="NCBI Taxonomy" id="269482"/>
    <lineage>
        <taxon>Bacteria</taxon>
        <taxon>Pseudomonadati</taxon>
        <taxon>Pseudomonadota</taxon>
        <taxon>Betaproteobacteria</taxon>
        <taxon>Burkholderiales</taxon>
        <taxon>Burkholderiaceae</taxon>
        <taxon>Burkholderia</taxon>
        <taxon>Burkholderia cepacia complex</taxon>
    </lineage>
</organism>
<gene>
    <name evidence="1" type="primary">pyrH</name>
    <name type="ordered locus">Bcep1808_1923</name>
</gene>
<proteinExistence type="inferred from homology"/>
<name>PYRH_BURVG</name>
<accession>A4JF73</accession>
<evidence type="ECO:0000255" key="1">
    <source>
        <dbReference type="HAMAP-Rule" id="MF_01220"/>
    </source>
</evidence>
<protein>
    <recommendedName>
        <fullName evidence="1">Uridylate kinase</fullName>
        <shortName evidence="1">UK</shortName>
        <ecNumber evidence="1">2.7.4.22</ecNumber>
    </recommendedName>
    <alternativeName>
        <fullName evidence="1">Uridine monophosphate kinase</fullName>
        <shortName evidence="1">UMP kinase</shortName>
        <shortName evidence="1">UMPK</shortName>
    </alternativeName>
</protein>
<feature type="chain" id="PRO_0000323818" description="Uridylate kinase">
    <location>
        <begin position="1"/>
        <end position="237"/>
    </location>
</feature>
<feature type="binding site" evidence="1">
    <location>
        <begin position="11"/>
        <end position="14"/>
    </location>
    <ligand>
        <name>ATP</name>
        <dbReference type="ChEBI" id="CHEBI:30616"/>
    </ligand>
</feature>
<feature type="binding site" evidence="1">
    <location>
        <position position="53"/>
    </location>
    <ligand>
        <name>UMP</name>
        <dbReference type="ChEBI" id="CHEBI:57865"/>
    </ligand>
</feature>
<feature type="binding site" evidence="1">
    <location>
        <position position="54"/>
    </location>
    <ligand>
        <name>ATP</name>
        <dbReference type="ChEBI" id="CHEBI:30616"/>
    </ligand>
</feature>
<feature type="binding site" evidence="1">
    <location>
        <position position="58"/>
    </location>
    <ligand>
        <name>ATP</name>
        <dbReference type="ChEBI" id="CHEBI:30616"/>
    </ligand>
</feature>
<feature type="binding site" evidence="1">
    <location>
        <position position="73"/>
    </location>
    <ligand>
        <name>UMP</name>
        <dbReference type="ChEBI" id="CHEBI:57865"/>
    </ligand>
</feature>
<feature type="binding site" evidence="1">
    <location>
        <begin position="134"/>
        <end position="141"/>
    </location>
    <ligand>
        <name>UMP</name>
        <dbReference type="ChEBI" id="CHEBI:57865"/>
    </ligand>
</feature>
<feature type="binding site" evidence="1">
    <location>
        <position position="161"/>
    </location>
    <ligand>
        <name>ATP</name>
        <dbReference type="ChEBI" id="CHEBI:30616"/>
    </ligand>
</feature>
<feature type="binding site" evidence="1">
    <location>
        <position position="167"/>
    </location>
    <ligand>
        <name>ATP</name>
        <dbReference type="ChEBI" id="CHEBI:30616"/>
    </ligand>
</feature>
<feature type="binding site" evidence="1">
    <location>
        <position position="170"/>
    </location>
    <ligand>
        <name>ATP</name>
        <dbReference type="ChEBI" id="CHEBI:30616"/>
    </ligand>
</feature>
<dbReference type="EC" id="2.7.4.22" evidence="1"/>
<dbReference type="EMBL" id="CP000614">
    <property type="protein sequence ID" value="ABO54926.1"/>
    <property type="molecule type" value="Genomic_DNA"/>
</dbReference>
<dbReference type="SMR" id="A4JF73"/>
<dbReference type="KEGG" id="bvi:Bcep1808_1923"/>
<dbReference type="eggNOG" id="COG0528">
    <property type="taxonomic scope" value="Bacteria"/>
</dbReference>
<dbReference type="HOGENOM" id="CLU_033861_0_0_4"/>
<dbReference type="UniPathway" id="UPA00159">
    <property type="reaction ID" value="UER00275"/>
</dbReference>
<dbReference type="Proteomes" id="UP000002287">
    <property type="component" value="Chromosome 1"/>
</dbReference>
<dbReference type="GO" id="GO:0005829">
    <property type="term" value="C:cytosol"/>
    <property type="evidence" value="ECO:0007669"/>
    <property type="project" value="TreeGrafter"/>
</dbReference>
<dbReference type="GO" id="GO:0005524">
    <property type="term" value="F:ATP binding"/>
    <property type="evidence" value="ECO:0007669"/>
    <property type="project" value="UniProtKB-KW"/>
</dbReference>
<dbReference type="GO" id="GO:0033862">
    <property type="term" value="F:UMP kinase activity"/>
    <property type="evidence" value="ECO:0007669"/>
    <property type="project" value="UniProtKB-EC"/>
</dbReference>
<dbReference type="GO" id="GO:0044210">
    <property type="term" value="P:'de novo' CTP biosynthetic process"/>
    <property type="evidence" value="ECO:0007669"/>
    <property type="project" value="UniProtKB-UniRule"/>
</dbReference>
<dbReference type="GO" id="GO:0006225">
    <property type="term" value="P:UDP biosynthetic process"/>
    <property type="evidence" value="ECO:0007669"/>
    <property type="project" value="TreeGrafter"/>
</dbReference>
<dbReference type="CDD" id="cd04254">
    <property type="entry name" value="AAK_UMPK-PyrH-Ec"/>
    <property type="match status" value="1"/>
</dbReference>
<dbReference type="FunFam" id="3.40.1160.10:FF:000001">
    <property type="entry name" value="Uridylate kinase"/>
    <property type="match status" value="1"/>
</dbReference>
<dbReference type="Gene3D" id="3.40.1160.10">
    <property type="entry name" value="Acetylglutamate kinase-like"/>
    <property type="match status" value="1"/>
</dbReference>
<dbReference type="HAMAP" id="MF_01220_B">
    <property type="entry name" value="PyrH_B"/>
    <property type="match status" value="1"/>
</dbReference>
<dbReference type="InterPro" id="IPR036393">
    <property type="entry name" value="AceGlu_kinase-like_sf"/>
</dbReference>
<dbReference type="InterPro" id="IPR001048">
    <property type="entry name" value="Asp/Glu/Uridylate_kinase"/>
</dbReference>
<dbReference type="InterPro" id="IPR011817">
    <property type="entry name" value="Uridylate_kinase"/>
</dbReference>
<dbReference type="InterPro" id="IPR015963">
    <property type="entry name" value="Uridylate_kinase_bac"/>
</dbReference>
<dbReference type="NCBIfam" id="TIGR02075">
    <property type="entry name" value="pyrH_bact"/>
    <property type="match status" value="1"/>
</dbReference>
<dbReference type="PANTHER" id="PTHR42833">
    <property type="entry name" value="URIDYLATE KINASE"/>
    <property type="match status" value="1"/>
</dbReference>
<dbReference type="PANTHER" id="PTHR42833:SF4">
    <property type="entry name" value="URIDYLATE KINASE PUMPKIN, CHLOROPLASTIC"/>
    <property type="match status" value="1"/>
</dbReference>
<dbReference type="Pfam" id="PF00696">
    <property type="entry name" value="AA_kinase"/>
    <property type="match status" value="1"/>
</dbReference>
<dbReference type="PIRSF" id="PIRSF005650">
    <property type="entry name" value="Uridylate_kin"/>
    <property type="match status" value="1"/>
</dbReference>
<dbReference type="SUPFAM" id="SSF53633">
    <property type="entry name" value="Carbamate kinase-like"/>
    <property type="match status" value="1"/>
</dbReference>
<sequence>MSNAYKRVLLKLSGEALMGDDAFGINRATIERMVADIAEVVGLGTQLAVVIGGGNIFRGVAGGAAGMDRATADYMGMLATMMNALALQDAMRHAGIVARVQSALRMDQVVEPYIRPRAIRQLEEGKVVIFAAGTGNPFFTTDTAAALRGSEVGAEVVLKATKVDGVYSADPKKDPSATRYTTISFDEAISRNLQVMDATAFALCRDQKLPIRVFSINKPGALKRIVLGEDEGTLVHV</sequence>
<keyword id="KW-0067">ATP-binding</keyword>
<keyword id="KW-0963">Cytoplasm</keyword>
<keyword id="KW-0418">Kinase</keyword>
<keyword id="KW-0547">Nucleotide-binding</keyword>
<keyword id="KW-0665">Pyrimidine biosynthesis</keyword>
<keyword id="KW-0808">Transferase</keyword>
<reference key="1">
    <citation type="submission" date="2007-03" db="EMBL/GenBank/DDBJ databases">
        <title>Complete sequence of chromosome 1 of Burkholderia vietnamiensis G4.</title>
        <authorList>
            <consortium name="US DOE Joint Genome Institute"/>
            <person name="Copeland A."/>
            <person name="Lucas S."/>
            <person name="Lapidus A."/>
            <person name="Barry K."/>
            <person name="Detter J.C."/>
            <person name="Glavina del Rio T."/>
            <person name="Hammon N."/>
            <person name="Israni S."/>
            <person name="Dalin E."/>
            <person name="Tice H."/>
            <person name="Pitluck S."/>
            <person name="Chain P."/>
            <person name="Malfatti S."/>
            <person name="Shin M."/>
            <person name="Vergez L."/>
            <person name="Schmutz J."/>
            <person name="Larimer F."/>
            <person name="Land M."/>
            <person name="Hauser L."/>
            <person name="Kyrpides N."/>
            <person name="Tiedje J."/>
            <person name="Richardson P."/>
        </authorList>
    </citation>
    <scope>NUCLEOTIDE SEQUENCE [LARGE SCALE GENOMIC DNA]</scope>
    <source>
        <strain>G4 / LMG 22486</strain>
    </source>
</reference>